<proteinExistence type="evidence at protein level"/>
<sequence>MANMIDKIDLKSQGSSNLSGEMTNHQKVGTLYKRLLLQVKHLWHFLLLAAIGSIFFSAADASMIYLINPILNYGFGPGGGITKQSATILMLMGVGMVGLLALRSVGSFVSQYFIGSLGQKVVYKFRKDIYKRLMDLPASFFDKHSTGQIISRLLYNVDQVIEATSTAIITVVQDGTFVIGLIVVMFVSSWQLSLFLIVVGPFLGLFISIINKKFRNLSRNTQSSMGNVTHTAEETIRNYKEIRIFGAQQKQQNKFFKNLDYTYSQQIRTIALDALTSPVIQIIASLVLAFSLFTIAIFGTNEGDGSSWLTAGSFASFFAAAAAILKPIKNLTKVNVVIQKAVAATEDIFYILDYPAEKETGSKELAKVDGNVTIKDLSFAFGEHKVLSGVSVDIKAGQTVAFVGKSGSGKTTLTSIISRFYTQHEGEILLDGVDTRELTLENLRSHLSIVSQNVHLFDDTVYNNIAFGLSREVSEEEVIDALKRANAYEFVQELSDGINTNIGNNGSKLSGGQRQRISIARALLKNAPVLIFDEATSALDNESERVVQQALESLTKSCTTIVIAHRLSTVENADKIVVMDGGRVVESGKHQELLEQGGLYTRLYQSGLQ</sequence>
<dbReference type="EC" id="7.5.2.6" evidence="1"/>
<dbReference type="EMBL" id="AM286280">
    <property type="protein sequence ID" value="CAL08125.1"/>
    <property type="molecule type" value="Genomic_DNA"/>
</dbReference>
<dbReference type="RefSeq" id="WP_003019850.1">
    <property type="nucleotide sequence ID" value="NC_008245.1"/>
</dbReference>
<dbReference type="PDB" id="5DGX">
    <property type="method" value="X-ray"/>
    <property type="resolution" value="1.73 A"/>
    <property type="chains" value="A=357-609"/>
</dbReference>
<dbReference type="PDBsum" id="5DGX"/>
<dbReference type="SMR" id="Q14JW6"/>
<dbReference type="KEGG" id="ftf:FTF0109"/>
<dbReference type="HOGENOM" id="CLU_000604_84_3_6"/>
<dbReference type="EvolutionaryTrace" id="Q14JW6"/>
<dbReference type="GO" id="GO:0005886">
    <property type="term" value="C:plasma membrane"/>
    <property type="evidence" value="ECO:0007669"/>
    <property type="project" value="UniProtKB-SubCell"/>
</dbReference>
<dbReference type="GO" id="GO:0140359">
    <property type="term" value="F:ABC-type transporter activity"/>
    <property type="evidence" value="ECO:0007669"/>
    <property type="project" value="InterPro"/>
</dbReference>
<dbReference type="GO" id="GO:0005524">
    <property type="term" value="F:ATP binding"/>
    <property type="evidence" value="ECO:0007669"/>
    <property type="project" value="UniProtKB-KW"/>
</dbReference>
<dbReference type="GO" id="GO:0016887">
    <property type="term" value="F:ATP hydrolysis activity"/>
    <property type="evidence" value="ECO:0007669"/>
    <property type="project" value="InterPro"/>
</dbReference>
<dbReference type="GO" id="GO:0034040">
    <property type="term" value="F:ATPase-coupled lipid transmembrane transporter activity"/>
    <property type="evidence" value="ECO:0007669"/>
    <property type="project" value="InterPro"/>
</dbReference>
<dbReference type="CDD" id="cd18552">
    <property type="entry name" value="ABC_6TM_MsbA_like"/>
    <property type="match status" value="1"/>
</dbReference>
<dbReference type="FunFam" id="3.40.50.300:FF:000140">
    <property type="entry name" value="Lipid A export ATP-binding/permease protein MsbA"/>
    <property type="match status" value="1"/>
</dbReference>
<dbReference type="Gene3D" id="1.20.1560.10">
    <property type="entry name" value="ABC transporter type 1, transmembrane domain"/>
    <property type="match status" value="1"/>
</dbReference>
<dbReference type="Gene3D" id="3.40.50.300">
    <property type="entry name" value="P-loop containing nucleotide triphosphate hydrolases"/>
    <property type="match status" value="1"/>
</dbReference>
<dbReference type="InterPro" id="IPR003593">
    <property type="entry name" value="AAA+_ATPase"/>
</dbReference>
<dbReference type="InterPro" id="IPR011527">
    <property type="entry name" value="ABC1_TM_dom"/>
</dbReference>
<dbReference type="InterPro" id="IPR036640">
    <property type="entry name" value="ABC1_TM_sf"/>
</dbReference>
<dbReference type="InterPro" id="IPR003439">
    <property type="entry name" value="ABC_transporter-like_ATP-bd"/>
</dbReference>
<dbReference type="InterPro" id="IPR017871">
    <property type="entry name" value="ABC_transporter-like_CS"/>
</dbReference>
<dbReference type="InterPro" id="IPR011917">
    <property type="entry name" value="ABC_transpr_lipidA"/>
</dbReference>
<dbReference type="InterPro" id="IPR027417">
    <property type="entry name" value="P-loop_NTPase"/>
</dbReference>
<dbReference type="InterPro" id="IPR039421">
    <property type="entry name" value="Type_1_exporter"/>
</dbReference>
<dbReference type="NCBIfam" id="TIGR02203">
    <property type="entry name" value="MsbA_lipidA"/>
    <property type="match status" value="1"/>
</dbReference>
<dbReference type="PANTHER" id="PTHR24221">
    <property type="entry name" value="ATP-BINDING CASSETTE SUB-FAMILY B"/>
    <property type="match status" value="1"/>
</dbReference>
<dbReference type="PANTHER" id="PTHR24221:SF632">
    <property type="entry name" value="ATP-DEPENDENT LIPID A-CORE FLIPPASE"/>
    <property type="match status" value="1"/>
</dbReference>
<dbReference type="Pfam" id="PF00664">
    <property type="entry name" value="ABC_membrane"/>
    <property type="match status" value="1"/>
</dbReference>
<dbReference type="Pfam" id="PF00005">
    <property type="entry name" value="ABC_tran"/>
    <property type="match status" value="1"/>
</dbReference>
<dbReference type="SMART" id="SM00382">
    <property type="entry name" value="AAA"/>
    <property type="match status" value="1"/>
</dbReference>
<dbReference type="SUPFAM" id="SSF90123">
    <property type="entry name" value="ABC transporter transmembrane region"/>
    <property type="match status" value="1"/>
</dbReference>
<dbReference type="SUPFAM" id="SSF52540">
    <property type="entry name" value="P-loop containing nucleoside triphosphate hydrolases"/>
    <property type="match status" value="1"/>
</dbReference>
<dbReference type="PROSITE" id="PS50929">
    <property type="entry name" value="ABC_TM1F"/>
    <property type="match status" value="1"/>
</dbReference>
<dbReference type="PROSITE" id="PS00211">
    <property type="entry name" value="ABC_TRANSPORTER_1"/>
    <property type="match status" value="1"/>
</dbReference>
<dbReference type="PROSITE" id="PS50893">
    <property type="entry name" value="ABC_TRANSPORTER_2"/>
    <property type="match status" value="1"/>
</dbReference>
<dbReference type="PROSITE" id="PS51239">
    <property type="entry name" value="MSBA"/>
    <property type="match status" value="1"/>
</dbReference>
<comment type="function">
    <text evidence="1">Involved in lipopolysaccharide (LPS) biosynthesis. Translocates lipid A-core from the inner to the outer leaflet of the inner membrane. Transmembrane domains (TMD) form a pore in the inner membrane and the ATP-binding domain (NBD) is responsible for energy generation.</text>
</comment>
<comment type="catalytic activity">
    <reaction evidence="1">
        <text>ATP + H2O + lipid A-core oligosaccharideSide 1 = ADP + phosphate + lipid A-core oligosaccharideSide 2.</text>
        <dbReference type="EC" id="7.5.2.6"/>
    </reaction>
</comment>
<comment type="subunit">
    <text evidence="1">Homodimer.</text>
</comment>
<comment type="subcellular location">
    <subcellularLocation>
        <location evidence="1">Cell inner membrane</location>
        <topology evidence="1">Multi-pass membrane protein</topology>
    </subcellularLocation>
</comment>
<comment type="domain">
    <text evidence="1">In MsbA the ATP-binding domain (NBD) and the transmembrane domain (TMD) are fused.</text>
</comment>
<comment type="similarity">
    <text evidence="1">Belongs to the ABC transporter superfamily. Lipid exporter (TC 3.A.1.106) family.</text>
</comment>
<protein>
    <recommendedName>
        <fullName evidence="1">ATP-dependent lipid A-core flippase</fullName>
        <ecNumber evidence="1">7.5.2.6</ecNumber>
    </recommendedName>
    <alternativeName>
        <fullName evidence="1">Lipid A export ATP-binding/permease protein MsbA</fullName>
    </alternativeName>
</protein>
<feature type="chain" id="PRO_0000271628" description="ATP-dependent lipid A-core flippase">
    <location>
        <begin position="1"/>
        <end position="609"/>
    </location>
</feature>
<feature type="transmembrane region" description="Helical" evidence="1">
    <location>
        <begin position="47"/>
        <end position="67"/>
    </location>
</feature>
<feature type="transmembrane region" description="Helical" evidence="1">
    <location>
        <begin position="88"/>
        <end position="108"/>
    </location>
</feature>
<feature type="transmembrane region" description="Helical" evidence="1">
    <location>
        <begin position="167"/>
        <end position="187"/>
    </location>
</feature>
<feature type="transmembrane region" description="Helical" evidence="1">
    <location>
        <begin position="190"/>
        <end position="210"/>
    </location>
</feature>
<feature type="transmembrane region" description="Helical" evidence="1">
    <location>
        <begin position="279"/>
        <end position="299"/>
    </location>
</feature>
<feature type="transmembrane region" description="Helical" evidence="1">
    <location>
        <begin position="305"/>
        <end position="325"/>
    </location>
</feature>
<feature type="domain" description="ABC transmembrane type-1" evidence="1">
    <location>
        <begin position="47"/>
        <end position="340"/>
    </location>
</feature>
<feature type="domain" description="ABC transporter" evidence="1">
    <location>
        <begin position="372"/>
        <end position="606"/>
    </location>
</feature>
<feature type="binding site" evidence="1">
    <location>
        <begin position="404"/>
        <end position="411"/>
    </location>
    <ligand>
        <name>ATP</name>
        <dbReference type="ChEBI" id="CHEBI:30616"/>
    </ligand>
</feature>
<feature type="strand" evidence="2">
    <location>
        <begin position="372"/>
        <end position="381"/>
    </location>
</feature>
<feature type="strand" evidence="2">
    <location>
        <begin position="384"/>
        <end position="394"/>
    </location>
</feature>
<feature type="strand" evidence="2">
    <location>
        <begin position="399"/>
        <end position="403"/>
    </location>
</feature>
<feature type="helix" evidence="2">
    <location>
        <begin position="410"/>
        <end position="417"/>
    </location>
</feature>
<feature type="strand" evidence="2">
    <location>
        <begin position="424"/>
        <end position="430"/>
    </location>
</feature>
<feature type="helix" evidence="2">
    <location>
        <begin position="435"/>
        <end position="437"/>
    </location>
</feature>
<feature type="helix" evidence="2">
    <location>
        <begin position="440"/>
        <end position="445"/>
    </location>
</feature>
<feature type="strand" evidence="2">
    <location>
        <begin position="447"/>
        <end position="452"/>
    </location>
</feature>
<feature type="strand" evidence="2">
    <location>
        <begin position="458"/>
        <end position="460"/>
    </location>
</feature>
<feature type="helix" evidence="2">
    <location>
        <begin position="461"/>
        <end position="466"/>
    </location>
</feature>
<feature type="helix" evidence="2">
    <location>
        <begin position="475"/>
        <end position="484"/>
    </location>
</feature>
<feature type="helix" evidence="2">
    <location>
        <begin position="488"/>
        <end position="492"/>
    </location>
</feature>
<feature type="helix" evidence="2">
    <location>
        <begin position="497"/>
        <end position="499"/>
    </location>
</feature>
<feature type="helix" evidence="2">
    <location>
        <begin position="504"/>
        <end position="506"/>
    </location>
</feature>
<feature type="helix" evidence="2">
    <location>
        <begin position="511"/>
        <end position="525"/>
    </location>
</feature>
<feature type="strand" evidence="2">
    <location>
        <begin position="528"/>
        <end position="533"/>
    </location>
</feature>
<feature type="helix" evidence="2">
    <location>
        <begin position="552"/>
        <end position="556"/>
    </location>
</feature>
<feature type="strand" evidence="2">
    <location>
        <begin position="558"/>
        <end position="563"/>
    </location>
</feature>
<feature type="helix" evidence="2">
    <location>
        <begin position="567"/>
        <end position="572"/>
    </location>
</feature>
<feature type="strand" evidence="2">
    <location>
        <begin position="574"/>
        <end position="580"/>
    </location>
</feature>
<feature type="strand" evidence="2">
    <location>
        <begin position="583"/>
        <end position="588"/>
    </location>
</feature>
<feature type="helix" evidence="2">
    <location>
        <begin position="590"/>
        <end position="595"/>
    </location>
</feature>
<feature type="helix" evidence="2">
    <location>
        <begin position="599"/>
        <end position="605"/>
    </location>
</feature>
<evidence type="ECO:0000255" key="1">
    <source>
        <dbReference type="HAMAP-Rule" id="MF_01703"/>
    </source>
</evidence>
<evidence type="ECO:0007829" key="2">
    <source>
        <dbReference type="PDB" id="5DGX"/>
    </source>
</evidence>
<reference key="1">
    <citation type="journal article" date="2007" name="PLoS ONE">
        <title>Genome sequencing shows that European isolates of Francisella tularensis subspecies tularensis are almost identical to US laboratory strain Schu S4.</title>
        <authorList>
            <person name="Chaudhuri R.R."/>
            <person name="Ren C.-P."/>
            <person name="Desmond L."/>
            <person name="Vincent G.A."/>
            <person name="Silman N.J."/>
            <person name="Brehm J.K."/>
            <person name="Elmore M.J."/>
            <person name="Hudson M.J."/>
            <person name="Forsman M."/>
            <person name="Isherwood K.E."/>
            <person name="Gurycova D."/>
            <person name="Minton N.P."/>
            <person name="Titball R.W."/>
            <person name="Pallen M.J."/>
            <person name="Vipond R."/>
        </authorList>
    </citation>
    <scope>NUCLEOTIDE SEQUENCE [LARGE SCALE GENOMIC DNA]</scope>
    <source>
        <strain>FSC 198</strain>
    </source>
</reference>
<organism>
    <name type="scientific">Francisella tularensis subsp. tularensis (strain FSC 198)</name>
    <dbReference type="NCBI Taxonomy" id="393115"/>
    <lineage>
        <taxon>Bacteria</taxon>
        <taxon>Pseudomonadati</taxon>
        <taxon>Pseudomonadota</taxon>
        <taxon>Gammaproteobacteria</taxon>
        <taxon>Thiotrichales</taxon>
        <taxon>Francisellaceae</taxon>
        <taxon>Francisella</taxon>
    </lineage>
</organism>
<keyword id="KW-0002">3D-structure</keyword>
<keyword id="KW-0067">ATP-binding</keyword>
<keyword id="KW-0997">Cell inner membrane</keyword>
<keyword id="KW-1003">Cell membrane</keyword>
<keyword id="KW-0445">Lipid transport</keyword>
<keyword id="KW-0472">Membrane</keyword>
<keyword id="KW-0547">Nucleotide-binding</keyword>
<keyword id="KW-1278">Translocase</keyword>
<keyword id="KW-0812">Transmembrane</keyword>
<keyword id="KW-1133">Transmembrane helix</keyword>
<keyword id="KW-0813">Transport</keyword>
<gene>
    <name evidence="1" type="primary">msbA</name>
    <name type="ordered locus">FTF0109</name>
</gene>
<name>MSBA_FRAT1</name>
<accession>Q14JW6</accession>